<gene>
    <name type="primary">UGT2B18</name>
</gene>
<accession>O97951</accession>
<proteinExistence type="evidence at protein level"/>
<comment type="function">
    <text>UDPGT is of major importance in the conjugation and subsequent elimination of potentially toxic xenobiotics and endogenous compounds. This isozyme displays activity toward 3-hydroxyandrogens. It is principally active on C19 steroids having a hydroxyl group at position 3-alpha of the steroid molecule and also active on planar phenols and bile acids.</text>
</comment>
<comment type="catalytic activity">
    <reaction>
        <text>glucuronate acceptor + UDP-alpha-D-glucuronate = acceptor beta-D-glucuronoside + UDP + H(+)</text>
        <dbReference type="Rhea" id="RHEA:21032"/>
        <dbReference type="ChEBI" id="CHEBI:15378"/>
        <dbReference type="ChEBI" id="CHEBI:58052"/>
        <dbReference type="ChEBI" id="CHEBI:58223"/>
        <dbReference type="ChEBI" id="CHEBI:132367"/>
        <dbReference type="ChEBI" id="CHEBI:132368"/>
        <dbReference type="EC" id="2.4.1.17"/>
    </reaction>
</comment>
<comment type="subcellular location">
    <subcellularLocation>
        <location evidence="1">Microsome membrane</location>
        <topology evidence="1">Single-pass membrane protein</topology>
    </subcellularLocation>
    <subcellularLocation>
        <location evidence="4">Endoplasmic reticulum membrane</location>
        <topology evidence="4">Single-pass membrane protein</topology>
    </subcellularLocation>
</comment>
<comment type="tissue specificity">
    <text evidence="3">Expressed in liver, prostate, kidney, testis, adrenal, bile duct, bladder, colon, small intestine, cerebellum and pancreas.</text>
</comment>
<comment type="similarity">
    <text evidence="4">Belongs to the UDP-glycosyltransferase family.</text>
</comment>
<dbReference type="EC" id="2.4.1.17"/>
<dbReference type="EMBL" id="AF016310">
    <property type="protein sequence ID" value="AAC98726.1"/>
    <property type="molecule type" value="mRNA"/>
</dbReference>
<dbReference type="RefSeq" id="NP_001306408.1">
    <property type="nucleotide sequence ID" value="NM_001319479.1"/>
</dbReference>
<dbReference type="SMR" id="O97951"/>
<dbReference type="STRING" id="9541.ENSMFAP00000018087"/>
<dbReference type="CAZy" id="GT1">
    <property type="family name" value="Glycosyltransferase Family 1"/>
</dbReference>
<dbReference type="GlyCosmos" id="O97951">
    <property type="glycosylation" value="2 sites, No reported glycans"/>
</dbReference>
<dbReference type="eggNOG" id="KOG1192">
    <property type="taxonomic scope" value="Eukaryota"/>
</dbReference>
<dbReference type="SABIO-RK" id="O97951"/>
<dbReference type="Proteomes" id="UP000233100">
    <property type="component" value="Unplaced"/>
</dbReference>
<dbReference type="GO" id="GO:0005789">
    <property type="term" value="C:endoplasmic reticulum membrane"/>
    <property type="evidence" value="ECO:0007669"/>
    <property type="project" value="UniProtKB-SubCell"/>
</dbReference>
<dbReference type="GO" id="GO:0015020">
    <property type="term" value="F:glucuronosyltransferase activity"/>
    <property type="evidence" value="ECO:0007669"/>
    <property type="project" value="UniProtKB-EC"/>
</dbReference>
<dbReference type="CDD" id="cd03784">
    <property type="entry name" value="GT1_Gtf-like"/>
    <property type="match status" value="1"/>
</dbReference>
<dbReference type="FunFam" id="3.40.50.2000:FF:000001">
    <property type="entry name" value="UDP-glucuronosyltransferase"/>
    <property type="match status" value="1"/>
</dbReference>
<dbReference type="FunFam" id="3.40.50.2000:FF:000081">
    <property type="entry name" value="UDP-glucuronosyltransferase 2A2"/>
    <property type="match status" value="1"/>
</dbReference>
<dbReference type="Gene3D" id="3.40.50.2000">
    <property type="entry name" value="Glycogen Phosphorylase B"/>
    <property type="match status" value="2"/>
</dbReference>
<dbReference type="InterPro" id="IPR050271">
    <property type="entry name" value="UDP-glycosyltransferase"/>
</dbReference>
<dbReference type="InterPro" id="IPR002213">
    <property type="entry name" value="UDP_glucos_trans"/>
</dbReference>
<dbReference type="InterPro" id="IPR035595">
    <property type="entry name" value="UDP_glycos_trans_CS"/>
</dbReference>
<dbReference type="PANTHER" id="PTHR48043">
    <property type="entry name" value="EG:EG0003.4 PROTEIN-RELATED"/>
    <property type="match status" value="1"/>
</dbReference>
<dbReference type="PANTHER" id="PTHR48043:SF160">
    <property type="entry name" value="UDP-GLUCURONOSYLTRANSFERASE 2B33"/>
    <property type="match status" value="1"/>
</dbReference>
<dbReference type="Pfam" id="PF00201">
    <property type="entry name" value="UDPGT"/>
    <property type="match status" value="1"/>
</dbReference>
<dbReference type="SUPFAM" id="SSF53756">
    <property type="entry name" value="UDP-Glycosyltransferase/glycogen phosphorylase"/>
    <property type="match status" value="1"/>
</dbReference>
<dbReference type="PROSITE" id="PS00375">
    <property type="entry name" value="UDPGT"/>
    <property type="match status" value="1"/>
</dbReference>
<reference key="1">
    <citation type="journal article" date="1998" name="J. Mol. Biol.">
        <title>Isolation and characterization of a simian UDP-glucuronosyltransferase UGT2B18 active on 3-hydroxyandrogens.</title>
        <authorList>
            <person name="Beaulieu M."/>
            <person name="Levesque E."/>
            <person name="Barbier O."/>
            <person name="Turgeon D."/>
            <person name="Belanger G."/>
            <person name="Hum D.W."/>
            <person name="Belanger A."/>
        </authorList>
    </citation>
    <scope>NUCLEOTIDE SEQUENCE [MRNA]</scope>
    <scope>CHARACTERIZATION</scope>
    <scope>TISSUE SPECIFICITY</scope>
    <source>
        <tissue>Prostate</tissue>
    </source>
</reference>
<protein>
    <recommendedName>
        <fullName>UDP-glucuronosyltransferase 2B18</fullName>
        <shortName>UDPGT 2B18</shortName>
        <ecNumber>2.4.1.17</ecNumber>
    </recommendedName>
</protein>
<organism>
    <name type="scientific">Macaca fascicularis</name>
    <name type="common">Crab-eating macaque</name>
    <name type="synonym">Cynomolgus monkey</name>
    <dbReference type="NCBI Taxonomy" id="9541"/>
    <lineage>
        <taxon>Eukaryota</taxon>
        <taxon>Metazoa</taxon>
        <taxon>Chordata</taxon>
        <taxon>Craniata</taxon>
        <taxon>Vertebrata</taxon>
        <taxon>Euteleostomi</taxon>
        <taxon>Mammalia</taxon>
        <taxon>Eutheria</taxon>
        <taxon>Euarchontoglires</taxon>
        <taxon>Primates</taxon>
        <taxon>Haplorrhini</taxon>
        <taxon>Catarrhini</taxon>
        <taxon>Cercopithecidae</taxon>
        <taxon>Cercopithecinae</taxon>
        <taxon>Macaca</taxon>
    </lineage>
</organism>
<sequence length="529" mass="60801">MSVKWTSVILLIQLSFYFSSGSCGKVLVWAAEYSHWMNMKTILEELVQRGHEVTVLASSASILFDPNNSSALKIEVFPTSLTKTEFENIIRQQIKRWSELPKDTFWLYFSQMQEIMWKFGDITRNFCKDVVSNKKLMKKLQKSRFDVVFADAIFPCSELLAELLNTPLVYSLRFTPGYNFEKHCGGFLFPPSYVPVVMSELSDHMTFMERVKNMIYMLYFDFCFQIYAMKKWDQFYSEVLGRPTTLSETMGKADIWLIRNSWNFQFPHPLLPNVDFVGGLHCKPAKPLPKEMEEFVQSSGENGVVVFSLGSMVTNMKEERANVIASALAQIPQKVLWRFDGKKPDTLGLNTRLYKWIPQNDLLGHPKTRAFITHGGSNGIYEAIYHGVPMVGIPLFADQPDNIAHMKAKGAAVRLDFDTMSSTDLVNALKTVINDPLYKENVMKLSRIQHDQPVKPLDRAVFWIEFVMRHKGAKHLRPAAHDLTWFQYHSLDVIGFLLACVATVIFIIMKCCLFCFWKFARKGKKGKSD</sequence>
<keyword id="KW-0256">Endoplasmic reticulum</keyword>
<keyword id="KW-0325">Glycoprotein</keyword>
<keyword id="KW-0328">Glycosyltransferase</keyword>
<keyword id="KW-0472">Membrane</keyword>
<keyword id="KW-0492">Microsome</keyword>
<keyword id="KW-1185">Reference proteome</keyword>
<keyword id="KW-0732">Signal</keyword>
<keyword id="KW-0808">Transferase</keyword>
<keyword id="KW-0812">Transmembrane</keyword>
<keyword id="KW-1133">Transmembrane helix</keyword>
<evidence type="ECO:0000250" key="1"/>
<evidence type="ECO:0000255" key="2"/>
<evidence type="ECO:0000269" key="3">
    <source>
    </source>
</evidence>
<evidence type="ECO:0000305" key="4"/>
<name>UDB18_MACFA</name>
<feature type="signal peptide" evidence="2">
    <location>
        <begin position="1"/>
        <end position="21"/>
    </location>
</feature>
<feature type="chain" id="PRO_0000036042" description="UDP-glucuronosyltransferase 2B18">
    <location>
        <begin position="22"/>
        <end position="529"/>
    </location>
</feature>
<feature type="transmembrane region" description="Helical" evidence="2">
    <location>
        <begin position="493"/>
        <end position="513"/>
    </location>
</feature>
<feature type="glycosylation site" description="N-linked (GlcNAc...) asparagine" evidence="2">
    <location>
        <position position="67"/>
    </location>
</feature>
<feature type="glycosylation site" description="N-linked (GlcNAc...) asparagine" evidence="2">
    <location>
        <position position="68"/>
    </location>
</feature>